<protein>
    <recommendedName>
        <fullName>NADH-ubiquinone oxidoreductase chain 4L</fullName>
        <ecNumber>7.1.1.2</ecNumber>
    </recommendedName>
    <alternativeName>
        <fullName>NADH dehydrogenase subunit 4L</fullName>
    </alternativeName>
</protein>
<evidence type="ECO:0000250" key="1">
    <source>
        <dbReference type="UniProtKB" id="P03901"/>
    </source>
</evidence>
<evidence type="ECO:0000250" key="2">
    <source>
        <dbReference type="UniProtKB" id="P03902"/>
    </source>
</evidence>
<evidence type="ECO:0000255" key="3"/>
<evidence type="ECO:0000305" key="4"/>
<comment type="function">
    <text evidence="1">Core subunit of the mitochondrial membrane respiratory chain NADH dehydrogenase (Complex I) which catalyzes electron transfer from NADH through the respiratory chain, using ubiquinone as an electron acceptor. Part of the enzyme membrane arm which is embedded in the lipid bilayer and involved in proton translocation.</text>
</comment>
<comment type="catalytic activity">
    <reaction evidence="1">
        <text>a ubiquinone + NADH + 5 H(+)(in) = a ubiquinol + NAD(+) + 4 H(+)(out)</text>
        <dbReference type="Rhea" id="RHEA:29091"/>
        <dbReference type="Rhea" id="RHEA-COMP:9565"/>
        <dbReference type="Rhea" id="RHEA-COMP:9566"/>
        <dbReference type="ChEBI" id="CHEBI:15378"/>
        <dbReference type="ChEBI" id="CHEBI:16389"/>
        <dbReference type="ChEBI" id="CHEBI:17976"/>
        <dbReference type="ChEBI" id="CHEBI:57540"/>
        <dbReference type="ChEBI" id="CHEBI:57945"/>
        <dbReference type="EC" id="7.1.1.2"/>
    </reaction>
    <physiologicalReaction direction="left-to-right" evidence="1">
        <dbReference type="Rhea" id="RHEA:29092"/>
    </physiologicalReaction>
</comment>
<comment type="subunit">
    <text evidence="2">Core subunit of respiratory chain NADH dehydrogenase (Complex I) which is composed of 45 different subunits.</text>
</comment>
<comment type="subcellular location">
    <subcellularLocation>
        <location evidence="2">Mitochondrion inner membrane</location>
        <topology evidence="3">Multi-pass membrane protein</topology>
    </subcellularLocation>
</comment>
<comment type="similarity">
    <text evidence="4">Belongs to the complex I subunit 4L family.</text>
</comment>
<proteinExistence type="inferred from homology"/>
<gene>
    <name type="primary">MT-ND4L</name>
    <name type="synonym">MTND4L</name>
    <name type="synonym">NADH4L</name>
    <name type="synonym">ND4L</name>
</gene>
<name>NU4LM_PHOSU</name>
<organism>
    <name type="scientific">Phodopus sungorus</name>
    <name type="common">Striped hairy-footed hamster</name>
    <name type="synonym">Djungarian hamster</name>
    <dbReference type="NCBI Taxonomy" id="10044"/>
    <lineage>
        <taxon>Eukaryota</taxon>
        <taxon>Metazoa</taxon>
        <taxon>Chordata</taxon>
        <taxon>Craniata</taxon>
        <taxon>Vertebrata</taxon>
        <taxon>Euteleostomi</taxon>
        <taxon>Mammalia</taxon>
        <taxon>Eutheria</taxon>
        <taxon>Euarchontoglires</taxon>
        <taxon>Glires</taxon>
        <taxon>Rodentia</taxon>
        <taxon>Myomorpha</taxon>
        <taxon>Muroidea</taxon>
        <taxon>Cricetidae</taxon>
        <taxon>Cricetinae</taxon>
        <taxon>Phodopus</taxon>
    </lineage>
</organism>
<accession>O21514</accession>
<geneLocation type="mitochondrion"/>
<keyword id="KW-0249">Electron transport</keyword>
<keyword id="KW-0472">Membrane</keyword>
<keyword id="KW-0496">Mitochondrion</keyword>
<keyword id="KW-0999">Mitochondrion inner membrane</keyword>
<keyword id="KW-0520">NAD</keyword>
<keyword id="KW-0679">Respiratory chain</keyword>
<keyword id="KW-1278">Translocase</keyword>
<keyword id="KW-0812">Transmembrane</keyword>
<keyword id="KW-1133">Transmembrane helix</keyword>
<keyword id="KW-0813">Transport</keyword>
<keyword id="KW-0830">Ubiquinone</keyword>
<reference key="1">
    <citation type="journal article" date="1998" name="Mol. Biol. Evol.">
        <title>Molecular systematics and paleobiogeography of the South American sigmodontine rodents.</title>
        <authorList>
            <person name="Engel S.R."/>
            <person name="Hogan K.M."/>
            <person name="Taylor J.F."/>
            <person name="Davis S.K."/>
        </authorList>
    </citation>
    <scope>NUCLEOTIDE SEQUENCE [GENOMIC DNA]</scope>
</reference>
<feature type="chain" id="PRO_0000118469" description="NADH-ubiquinone oxidoreductase chain 4L">
    <location>
        <begin position="1"/>
        <end position="98"/>
    </location>
</feature>
<feature type="transmembrane region" description="Helical" evidence="3">
    <location>
        <begin position="2"/>
        <end position="22"/>
    </location>
</feature>
<feature type="transmembrane region" description="Helical" evidence="3">
    <location>
        <begin position="26"/>
        <end position="46"/>
    </location>
</feature>
<feature type="transmembrane region" description="Helical" evidence="3">
    <location>
        <begin position="59"/>
        <end position="79"/>
    </location>
</feature>
<dbReference type="EC" id="7.1.1.2"/>
<dbReference type="EMBL" id="U83804">
    <property type="protein sequence ID" value="AAB87227.1"/>
    <property type="molecule type" value="Genomic_DNA"/>
</dbReference>
<dbReference type="SMR" id="O21514"/>
<dbReference type="GO" id="GO:0005743">
    <property type="term" value="C:mitochondrial inner membrane"/>
    <property type="evidence" value="ECO:0000250"/>
    <property type="project" value="UniProtKB"/>
</dbReference>
<dbReference type="GO" id="GO:0045271">
    <property type="term" value="C:respiratory chain complex I"/>
    <property type="evidence" value="ECO:0000250"/>
    <property type="project" value="UniProtKB"/>
</dbReference>
<dbReference type="GO" id="GO:0008137">
    <property type="term" value="F:NADH dehydrogenase (ubiquinone) activity"/>
    <property type="evidence" value="ECO:0000250"/>
    <property type="project" value="UniProtKB"/>
</dbReference>
<dbReference type="GO" id="GO:0042773">
    <property type="term" value="P:ATP synthesis coupled electron transport"/>
    <property type="evidence" value="ECO:0007669"/>
    <property type="project" value="InterPro"/>
</dbReference>
<dbReference type="FunFam" id="1.10.287.3510:FF:000002">
    <property type="entry name" value="NADH-ubiquinone oxidoreductase chain 4L"/>
    <property type="match status" value="1"/>
</dbReference>
<dbReference type="Gene3D" id="1.10.287.3510">
    <property type="match status" value="1"/>
</dbReference>
<dbReference type="InterPro" id="IPR001133">
    <property type="entry name" value="NADH_UbQ_OxRdtase_chain4L/K"/>
</dbReference>
<dbReference type="InterPro" id="IPR039428">
    <property type="entry name" value="NUOK/Mnh_C1-like"/>
</dbReference>
<dbReference type="PANTHER" id="PTHR11434:SF0">
    <property type="entry name" value="NADH-UBIQUINONE OXIDOREDUCTASE CHAIN 4L"/>
    <property type="match status" value="1"/>
</dbReference>
<dbReference type="PANTHER" id="PTHR11434">
    <property type="entry name" value="NADH-UBIQUINONE OXIDOREDUCTASE SUBUNIT ND4L"/>
    <property type="match status" value="1"/>
</dbReference>
<dbReference type="Pfam" id="PF00420">
    <property type="entry name" value="Oxidored_q2"/>
    <property type="match status" value="1"/>
</dbReference>
<sequence length="98" mass="10752">MMMAVLNISLAFIFSLLGTLMFRSHLMSTLLCLEGMMLTLFIITTITSLNSHSMVMYPIPIVILVFAACEAAVGLALLVKVSNTYGSDYVQNLNLLQC</sequence>